<keyword id="KW-0274">FAD</keyword>
<keyword id="KW-0285">Flavoprotein</keyword>
<keyword id="KW-0560">Oxidoreductase</keyword>
<keyword id="KW-1185">Reference proteome</keyword>
<reference key="1">
    <citation type="journal article" date="2005" name="Arch. Microbiol.">
        <title>The genome sequence of an anaerobic aromatic-degrading denitrifying bacterium, strain EbN1.</title>
        <authorList>
            <person name="Rabus R."/>
            <person name="Kube M."/>
            <person name="Heider J."/>
            <person name="Beck A."/>
            <person name="Heitmann K."/>
            <person name="Widdel F."/>
            <person name="Reinhardt R."/>
        </authorList>
    </citation>
    <scope>NUCLEOTIDE SEQUENCE [LARGE SCALE GENOMIC DNA]</scope>
    <source>
        <strain>DSM 19018 / LMG 30748 / EbN1</strain>
    </source>
</reference>
<reference key="2">
    <citation type="journal article" date="2021" name="Arch. Microbiol.">
        <title>Benzylmalonyl-CoA dehydrogenase, an enzyme involved in bacterial auxin degradation.</title>
        <authorList>
            <person name="Schuehle K."/>
            <person name="Saft M."/>
            <person name="Voegeli B."/>
            <person name="Erb T.J."/>
            <person name="Heider J."/>
        </authorList>
    </citation>
    <scope>FUNCTION</scope>
    <scope>CATALYTIC ACTIVITY</scope>
    <scope>COFACTOR</scope>
    <scope>BIOPHYSICOCHEMICAL PROPERTIES</scope>
    <scope>SUBUNIT</scope>
    <source>
        <strain>DSM 19018 / LMG 30748 / EbN1</strain>
    </source>
</reference>
<gene>
    <name evidence="3" type="primary">iaaF</name>
    <name evidence="4" type="ordered locus">AZOSEA11370</name>
    <name evidence="6" type="ORF">ebA2055</name>
</gene>
<feature type="chain" id="PRO_0000457284" description="Benzylmalonyl-CoA dehydrogenase">
    <location>
        <begin position="1"/>
        <end position="377"/>
    </location>
</feature>
<feature type="binding site" evidence="1">
    <location>
        <begin position="123"/>
        <end position="132"/>
    </location>
    <ligand>
        <name>FAD</name>
        <dbReference type="ChEBI" id="CHEBI:57692"/>
    </ligand>
</feature>
<feature type="binding site" evidence="1">
    <location>
        <begin position="156"/>
        <end position="158"/>
    </location>
    <ligand>
        <name>FAD</name>
        <dbReference type="ChEBI" id="CHEBI:57692"/>
    </ligand>
</feature>
<feature type="binding site" evidence="1">
    <location>
        <position position="266"/>
    </location>
    <ligand>
        <name>FAD</name>
        <dbReference type="ChEBI" id="CHEBI:57692"/>
    </ligand>
</feature>
<feature type="binding site" evidence="1">
    <location>
        <position position="277"/>
    </location>
    <ligand>
        <name>FAD</name>
        <dbReference type="ChEBI" id="CHEBI:57692"/>
    </ligand>
</feature>
<feature type="binding site" evidence="1">
    <location>
        <begin position="363"/>
        <end position="365"/>
    </location>
    <ligand>
        <name>FAD</name>
        <dbReference type="ChEBI" id="CHEBI:57692"/>
    </ligand>
</feature>
<accession>Q5P5Z9</accession>
<comment type="function">
    <text evidence="2 5">Involved in degradation of indoleacetate, the most common member of the auxin class of plant hormones (PubMed:34059946). Catalyzes the irreversible oxidative decarboxylation of (2-aminobenzyl)malonyl-CoA to 2-aminocinnamoyl-CoA and CO(2) (Probable). In vitro, shows high catalytic efficiency with benzylmalonyl-CoA, a chemical analog of the physiological substrate, but otherwise accepts only a few medium-chain alkylmalonyl-CoA compounds as alternative substrates with low activities (PubMed:34059946).</text>
</comment>
<comment type="catalytic activity">
    <reaction evidence="5">
        <text>(2-aminobenzyl)malonyl-CoA + O2 + H(+) = (E)-2-aminocinnamoyl-CoA + H2O2 + CO2</text>
        <dbReference type="Rhea" id="RHEA:69755"/>
        <dbReference type="ChEBI" id="CHEBI:15378"/>
        <dbReference type="ChEBI" id="CHEBI:15379"/>
        <dbReference type="ChEBI" id="CHEBI:16240"/>
        <dbReference type="ChEBI" id="CHEBI:16526"/>
        <dbReference type="ChEBI" id="CHEBI:188442"/>
        <dbReference type="ChEBI" id="CHEBI:188443"/>
        <dbReference type="EC" id="1.3.3.17"/>
    </reaction>
    <physiologicalReaction direction="left-to-right" evidence="5">
        <dbReference type="Rhea" id="RHEA:69756"/>
    </physiologicalReaction>
</comment>
<comment type="catalytic activity">
    <reaction evidence="2">
        <text>benzylmalonyl-CoA + O2 + H(+) = (E)-cinnamoyl-CoA + H2O2 + CO2</text>
        <dbReference type="Rhea" id="RHEA:69751"/>
        <dbReference type="ChEBI" id="CHEBI:15378"/>
        <dbReference type="ChEBI" id="CHEBI:15379"/>
        <dbReference type="ChEBI" id="CHEBI:16240"/>
        <dbReference type="ChEBI" id="CHEBI:16526"/>
        <dbReference type="ChEBI" id="CHEBI:57252"/>
        <dbReference type="ChEBI" id="CHEBI:188360"/>
        <dbReference type="EC" id="1.3.3.17"/>
    </reaction>
</comment>
<comment type="cofactor">
    <cofactor evidence="2">
        <name>FAD</name>
        <dbReference type="ChEBI" id="CHEBI:57692"/>
    </cofactor>
</comment>
<comment type="biophysicochemical properties">
    <kinetics>
        <KM evidence="2">1.6 uM for benzylmalonyl-CoA</KM>
        <Vmax evidence="2">5.1 umol/min/mg enzyme with benzylmalonyl-CoA as substrate</Vmax>
        <text evidence="2">kcat is 3.5 sec(-1) with benzylmalonyl-CoA as substrate.</text>
    </kinetics>
</comment>
<comment type="subunit">
    <text evidence="2">Homotetramer.</text>
</comment>
<comment type="miscellaneous">
    <text evidence="2">The expected physiological substrate of IaaF during indoleacetate degradation is (2-aminobenzyl)malonyl-CoA, which is not available for testing (PubMed:34059946). However, the missing amino group in benzylmalonyl-CoA does not appear crucial for substrate recognition, since the compound is readily accepted by IaaF (PubMed:34059946).</text>
</comment>
<comment type="similarity">
    <text evidence="4">Belongs to the acyl-CoA dehydrogenase family.</text>
</comment>
<sequence length="377" mass="40869">MDFDLTDEQRAIQDTFARFSDERIAPQAAALDEARAFPRALFRELAELGFFGMRYPESVGGSGLALSEFCLALSEVARGSMSLAGAVAMQSLMGTKFLQLLGNADIVERLFKPALRGDRIGAICMTEPNAGSDLESIATTATRVDGGYVINGQKTWITSAPVADFFTVFARAGDEKKLTIFLVEKDVPGITVGREIHKMGVWALPTSEVAFDGCFVPDSHRLSKEEGDGEGHLKKTLAEIRIITGAMALGVARAALFAAVRYAGERKQFGKPINRFQAIQLKLADMATGLEAATTLVHRAAWLCDMKRPHHKEAAMAKLFATETAAGICDDAARVLASYGYAMEYPVQRYLRDVRFTLIGGGTSEILKLVIAKEVSS</sequence>
<evidence type="ECO:0000250" key="1">
    <source>
        <dbReference type="UniProtKB" id="P26440"/>
    </source>
</evidence>
<evidence type="ECO:0000269" key="2">
    <source>
    </source>
</evidence>
<evidence type="ECO:0000303" key="3">
    <source>
    </source>
</evidence>
<evidence type="ECO:0000305" key="4"/>
<evidence type="ECO:0000305" key="5">
    <source>
    </source>
</evidence>
<evidence type="ECO:0000312" key="6">
    <source>
        <dbReference type="EMBL" id="CAI07262.1"/>
    </source>
</evidence>
<name>IAAF_AROAE</name>
<protein>
    <recommendedName>
        <fullName evidence="3">Benzylmalonyl-CoA dehydrogenase</fullName>
        <ecNumber evidence="2">1.3.3.17</ecNumber>
    </recommendedName>
</protein>
<proteinExistence type="evidence at protein level"/>
<organism>
    <name type="scientific">Aromatoleum aromaticum (strain DSM 19018 / LMG 30748 / EbN1)</name>
    <name type="common">Azoarcus sp. (strain EbN1)</name>
    <dbReference type="NCBI Taxonomy" id="76114"/>
    <lineage>
        <taxon>Bacteria</taxon>
        <taxon>Pseudomonadati</taxon>
        <taxon>Pseudomonadota</taxon>
        <taxon>Betaproteobacteria</taxon>
        <taxon>Rhodocyclales</taxon>
        <taxon>Rhodocyclaceae</taxon>
        <taxon>Aromatoleum</taxon>
    </lineage>
</organism>
<dbReference type="EC" id="1.3.3.17" evidence="2"/>
<dbReference type="EMBL" id="CR555306">
    <property type="protein sequence ID" value="CAI07262.1"/>
    <property type="molecule type" value="Genomic_DNA"/>
</dbReference>
<dbReference type="RefSeq" id="WP_011236983.1">
    <property type="nucleotide sequence ID" value="NC_006513.1"/>
</dbReference>
<dbReference type="SMR" id="Q5P5Z9"/>
<dbReference type="STRING" id="76114.ebA2055"/>
<dbReference type="KEGG" id="eba:ebA2055"/>
<dbReference type="eggNOG" id="COG1960">
    <property type="taxonomic scope" value="Bacteria"/>
</dbReference>
<dbReference type="HOGENOM" id="CLU_018204_0_2_4"/>
<dbReference type="OrthoDB" id="9770681at2"/>
<dbReference type="Proteomes" id="UP000006552">
    <property type="component" value="Chromosome"/>
</dbReference>
<dbReference type="GO" id="GO:0003995">
    <property type="term" value="F:acyl-CoA dehydrogenase activity"/>
    <property type="evidence" value="ECO:0007669"/>
    <property type="project" value="InterPro"/>
</dbReference>
<dbReference type="GO" id="GO:0050660">
    <property type="term" value="F:flavin adenine dinucleotide binding"/>
    <property type="evidence" value="ECO:0007669"/>
    <property type="project" value="InterPro"/>
</dbReference>
<dbReference type="FunFam" id="1.20.140.10:FF:000001">
    <property type="entry name" value="Acyl-CoA dehydrogenase"/>
    <property type="match status" value="1"/>
</dbReference>
<dbReference type="FunFam" id="2.40.110.10:FF:000002">
    <property type="entry name" value="Acyl-CoA dehydrogenase fadE12"/>
    <property type="match status" value="1"/>
</dbReference>
<dbReference type="Gene3D" id="1.10.540.10">
    <property type="entry name" value="Acyl-CoA dehydrogenase/oxidase, N-terminal domain"/>
    <property type="match status" value="1"/>
</dbReference>
<dbReference type="Gene3D" id="2.40.110.10">
    <property type="entry name" value="Butyryl-CoA Dehydrogenase, subunit A, domain 2"/>
    <property type="match status" value="1"/>
</dbReference>
<dbReference type="Gene3D" id="1.20.140.10">
    <property type="entry name" value="Butyryl-CoA Dehydrogenase, subunit A, domain 3"/>
    <property type="match status" value="1"/>
</dbReference>
<dbReference type="InterPro" id="IPR006089">
    <property type="entry name" value="Acyl-CoA_DH_CS"/>
</dbReference>
<dbReference type="InterPro" id="IPR006091">
    <property type="entry name" value="Acyl-CoA_Oxase/DH_mid-dom"/>
</dbReference>
<dbReference type="InterPro" id="IPR046373">
    <property type="entry name" value="Acyl-CoA_Oxase/DH_mid-dom_sf"/>
</dbReference>
<dbReference type="InterPro" id="IPR036250">
    <property type="entry name" value="AcylCo_DH-like_C"/>
</dbReference>
<dbReference type="InterPro" id="IPR009075">
    <property type="entry name" value="AcylCo_DH/oxidase_C"/>
</dbReference>
<dbReference type="InterPro" id="IPR013786">
    <property type="entry name" value="AcylCoA_DH/ox_N"/>
</dbReference>
<dbReference type="InterPro" id="IPR037069">
    <property type="entry name" value="AcylCoA_DH/ox_N_sf"/>
</dbReference>
<dbReference type="InterPro" id="IPR009100">
    <property type="entry name" value="AcylCoA_DH/oxidase_NM_dom_sf"/>
</dbReference>
<dbReference type="PANTHER" id="PTHR43884">
    <property type="entry name" value="ACYL-COA DEHYDROGENASE"/>
    <property type="match status" value="1"/>
</dbReference>
<dbReference type="PANTHER" id="PTHR43884:SF12">
    <property type="entry name" value="ISOVALERYL-COA DEHYDROGENASE, MITOCHONDRIAL-RELATED"/>
    <property type="match status" value="1"/>
</dbReference>
<dbReference type="Pfam" id="PF00441">
    <property type="entry name" value="Acyl-CoA_dh_1"/>
    <property type="match status" value="1"/>
</dbReference>
<dbReference type="Pfam" id="PF02770">
    <property type="entry name" value="Acyl-CoA_dh_M"/>
    <property type="match status" value="1"/>
</dbReference>
<dbReference type="Pfam" id="PF02771">
    <property type="entry name" value="Acyl-CoA_dh_N"/>
    <property type="match status" value="1"/>
</dbReference>
<dbReference type="PIRSF" id="PIRSF016578">
    <property type="entry name" value="HsaA"/>
    <property type="match status" value="1"/>
</dbReference>
<dbReference type="SUPFAM" id="SSF47203">
    <property type="entry name" value="Acyl-CoA dehydrogenase C-terminal domain-like"/>
    <property type="match status" value="1"/>
</dbReference>
<dbReference type="SUPFAM" id="SSF56645">
    <property type="entry name" value="Acyl-CoA dehydrogenase NM domain-like"/>
    <property type="match status" value="1"/>
</dbReference>
<dbReference type="PROSITE" id="PS00072">
    <property type="entry name" value="ACYL_COA_DH_1"/>
    <property type="match status" value="1"/>
</dbReference>